<sequence length="709" mass="76262">MEKTFNLTRREDGIAILMMDVPGETMNTLKAEFGPEISEILSEIKRDSSIRGLVLISGKKDSFVAGADISMLDACQTAGDAKALSQQGHVVFNELEALNIPVVAAIHGACLGGGLELALACHQRVCSDDGKTMLGVPEVQLGLLPGGGGTQRLPRLVGITTALDMMLTGKQIRPKQALKMGLVNDVVPQTILLQTAVEMALAGKRTAKPVKKSLVNQLLEGTGFGRNIIFDQAAKQVVKKTQGNYPAPAKIIDCVRQGMAKGMQKGLEVEASHFAELVVSKESEALRSIFFATTEMKKETGAEGATPRKVKKAVILGGGLMGGGIASVTTTKAKIPARVKDINEKGLSNALSYAYKLLDKGVKRRHMTPAVRDNLMALMTTTTEYKGVKDADIVVEAVFEDLALKHQMVKDIERECGEHTIFASNTSSLPIGQIAQAASRPENVIGLHYFSPVEKMPLVEVIAHAKTSPETIATTVAFARKQGKTPIVVQDGAGFYVNRILALYMNEAAQLLLEGQSIEHLDKALVKFGFPVGPITLLDEVGIDVGAKIAPILEKELGERFKAPAAFDKLLSDDRKGRKNGKGFYQYAAGNKASSKKKAVDESVYAVLGIKPGMDKDLSAVAERCVVQMLNEAVRCLDDGIIASPRDGDIGAIFGIGFPPFLGGPFHYIDTLGADNLVNILERYQAQYGDRFEPCPRLKAMAAEKARFF</sequence>
<feature type="chain" id="PRO_0000323530" description="Fatty acid oxidation complex subunit alpha">
    <location>
        <begin position="1"/>
        <end position="709"/>
    </location>
</feature>
<feature type="region of interest" description="Enoyl-CoA hydratase" evidence="1">
    <location>
        <begin position="1"/>
        <end position="188"/>
    </location>
</feature>
<feature type="region of interest" description="3-hydroxyacyl-CoA dehydrogenase" evidence="1">
    <location>
        <begin position="308"/>
        <end position="709"/>
    </location>
</feature>
<feature type="site" description="Important for catalytic activity" evidence="1">
    <location>
        <position position="116"/>
    </location>
</feature>
<feature type="site" description="Important for catalytic activity" evidence="1">
    <location>
        <position position="138"/>
    </location>
</feature>
<proteinExistence type="inferred from homology"/>
<reference key="1">
    <citation type="submission" date="2006-09" db="EMBL/GenBank/DDBJ databases">
        <title>Complete sequence of chromosome 1 of Shewanella sp. ANA-3.</title>
        <authorList>
            <person name="Copeland A."/>
            <person name="Lucas S."/>
            <person name="Lapidus A."/>
            <person name="Barry K."/>
            <person name="Detter J.C."/>
            <person name="Glavina del Rio T."/>
            <person name="Hammon N."/>
            <person name="Israni S."/>
            <person name="Dalin E."/>
            <person name="Tice H."/>
            <person name="Pitluck S."/>
            <person name="Chertkov O."/>
            <person name="Brettin T."/>
            <person name="Bruce D."/>
            <person name="Han C."/>
            <person name="Tapia R."/>
            <person name="Gilna P."/>
            <person name="Schmutz J."/>
            <person name="Larimer F."/>
            <person name="Land M."/>
            <person name="Hauser L."/>
            <person name="Kyrpides N."/>
            <person name="Kim E."/>
            <person name="Newman D."/>
            <person name="Salticov C."/>
            <person name="Konstantinidis K."/>
            <person name="Klappenback J."/>
            <person name="Tiedje J."/>
            <person name="Richardson P."/>
        </authorList>
    </citation>
    <scope>NUCLEOTIDE SEQUENCE [LARGE SCALE GENOMIC DNA]</scope>
    <source>
        <strain>ANA-3</strain>
    </source>
</reference>
<dbReference type="EC" id="4.2.1.17" evidence="1"/>
<dbReference type="EC" id="5.1.2.3" evidence="1"/>
<dbReference type="EC" id="1.1.1.35" evidence="1"/>
<dbReference type="EMBL" id="CP000469">
    <property type="protein sequence ID" value="ABK47695.1"/>
    <property type="molecule type" value="Genomic_DNA"/>
</dbReference>
<dbReference type="RefSeq" id="WP_011716519.1">
    <property type="nucleotide sequence ID" value="NC_008577.1"/>
</dbReference>
<dbReference type="SMR" id="A0KV76"/>
<dbReference type="STRING" id="94122.Shewana3_1461"/>
<dbReference type="KEGG" id="shn:Shewana3_1461"/>
<dbReference type="eggNOG" id="COG1024">
    <property type="taxonomic scope" value="Bacteria"/>
</dbReference>
<dbReference type="eggNOG" id="COG1250">
    <property type="taxonomic scope" value="Bacteria"/>
</dbReference>
<dbReference type="HOGENOM" id="CLU_009834_16_1_6"/>
<dbReference type="OrthoDB" id="5389341at2"/>
<dbReference type="UniPathway" id="UPA00659"/>
<dbReference type="Proteomes" id="UP000002589">
    <property type="component" value="Chromosome"/>
</dbReference>
<dbReference type="GO" id="GO:0005737">
    <property type="term" value="C:cytoplasm"/>
    <property type="evidence" value="ECO:0007669"/>
    <property type="project" value="UniProtKB-SubCell"/>
</dbReference>
<dbReference type="GO" id="GO:0008692">
    <property type="term" value="F:3-hydroxybutyryl-CoA epimerase activity"/>
    <property type="evidence" value="ECO:0007669"/>
    <property type="project" value="UniProtKB-UniRule"/>
</dbReference>
<dbReference type="GO" id="GO:0004300">
    <property type="term" value="F:enoyl-CoA hydratase activity"/>
    <property type="evidence" value="ECO:0007669"/>
    <property type="project" value="UniProtKB-UniRule"/>
</dbReference>
<dbReference type="GO" id="GO:0016509">
    <property type="term" value="F:long-chain-3-hydroxyacyl-CoA dehydrogenase activity"/>
    <property type="evidence" value="ECO:0007669"/>
    <property type="project" value="TreeGrafter"/>
</dbReference>
<dbReference type="GO" id="GO:0070403">
    <property type="term" value="F:NAD+ binding"/>
    <property type="evidence" value="ECO:0007669"/>
    <property type="project" value="InterPro"/>
</dbReference>
<dbReference type="GO" id="GO:0006635">
    <property type="term" value="P:fatty acid beta-oxidation"/>
    <property type="evidence" value="ECO:0007669"/>
    <property type="project" value="UniProtKB-UniRule"/>
</dbReference>
<dbReference type="CDD" id="cd06558">
    <property type="entry name" value="crotonase-like"/>
    <property type="match status" value="1"/>
</dbReference>
<dbReference type="FunFam" id="3.90.226.10:FF:000011">
    <property type="entry name" value="Fatty acid oxidation complex subunit alpha"/>
    <property type="match status" value="1"/>
</dbReference>
<dbReference type="FunFam" id="3.40.50.720:FF:000009">
    <property type="entry name" value="Fatty oxidation complex, alpha subunit"/>
    <property type="match status" value="1"/>
</dbReference>
<dbReference type="Gene3D" id="1.10.1040.50">
    <property type="match status" value="1"/>
</dbReference>
<dbReference type="Gene3D" id="3.90.226.10">
    <property type="entry name" value="2-enoyl-CoA Hydratase, Chain A, domain 1"/>
    <property type="match status" value="1"/>
</dbReference>
<dbReference type="Gene3D" id="3.40.50.720">
    <property type="entry name" value="NAD(P)-binding Rossmann-like Domain"/>
    <property type="match status" value="1"/>
</dbReference>
<dbReference type="HAMAP" id="MF_01617">
    <property type="entry name" value="FadJ"/>
    <property type="match status" value="1"/>
</dbReference>
<dbReference type="InterPro" id="IPR006176">
    <property type="entry name" value="3-OHacyl-CoA_DH_NAD-bd"/>
</dbReference>
<dbReference type="InterPro" id="IPR006108">
    <property type="entry name" value="3HC_DH_C"/>
</dbReference>
<dbReference type="InterPro" id="IPR008927">
    <property type="entry name" value="6-PGluconate_DH-like_C_sf"/>
</dbReference>
<dbReference type="InterPro" id="IPR029045">
    <property type="entry name" value="ClpP/crotonase-like_dom_sf"/>
</dbReference>
<dbReference type="InterPro" id="IPR001753">
    <property type="entry name" value="Enoyl-CoA_hydra/iso"/>
</dbReference>
<dbReference type="InterPro" id="IPR050136">
    <property type="entry name" value="FA_oxidation_alpha_subunit"/>
</dbReference>
<dbReference type="InterPro" id="IPR012802">
    <property type="entry name" value="FadJ"/>
</dbReference>
<dbReference type="InterPro" id="IPR036291">
    <property type="entry name" value="NAD(P)-bd_dom_sf"/>
</dbReference>
<dbReference type="NCBIfam" id="TIGR02440">
    <property type="entry name" value="FadJ"/>
    <property type="match status" value="1"/>
</dbReference>
<dbReference type="NCBIfam" id="NF008363">
    <property type="entry name" value="PRK11154.1"/>
    <property type="match status" value="1"/>
</dbReference>
<dbReference type="PANTHER" id="PTHR43612">
    <property type="entry name" value="TRIFUNCTIONAL ENZYME SUBUNIT ALPHA"/>
    <property type="match status" value="1"/>
</dbReference>
<dbReference type="PANTHER" id="PTHR43612:SF3">
    <property type="entry name" value="TRIFUNCTIONAL ENZYME SUBUNIT ALPHA, MITOCHONDRIAL"/>
    <property type="match status" value="1"/>
</dbReference>
<dbReference type="Pfam" id="PF00725">
    <property type="entry name" value="3HCDH"/>
    <property type="match status" value="2"/>
</dbReference>
<dbReference type="Pfam" id="PF02737">
    <property type="entry name" value="3HCDH_N"/>
    <property type="match status" value="1"/>
</dbReference>
<dbReference type="Pfam" id="PF00378">
    <property type="entry name" value="ECH_1"/>
    <property type="match status" value="1"/>
</dbReference>
<dbReference type="SUPFAM" id="SSF48179">
    <property type="entry name" value="6-phosphogluconate dehydrogenase C-terminal domain-like"/>
    <property type="match status" value="2"/>
</dbReference>
<dbReference type="SUPFAM" id="SSF52096">
    <property type="entry name" value="ClpP/crotonase"/>
    <property type="match status" value="1"/>
</dbReference>
<dbReference type="SUPFAM" id="SSF51735">
    <property type="entry name" value="NAD(P)-binding Rossmann-fold domains"/>
    <property type="match status" value="1"/>
</dbReference>
<evidence type="ECO:0000255" key="1">
    <source>
        <dbReference type="HAMAP-Rule" id="MF_01617"/>
    </source>
</evidence>
<accession>A0KV76</accession>
<organism>
    <name type="scientific">Shewanella sp. (strain ANA-3)</name>
    <dbReference type="NCBI Taxonomy" id="94122"/>
    <lineage>
        <taxon>Bacteria</taxon>
        <taxon>Pseudomonadati</taxon>
        <taxon>Pseudomonadota</taxon>
        <taxon>Gammaproteobacteria</taxon>
        <taxon>Alteromonadales</taxon>
        <taxon>Shewanellaceae</taxon>
        <taxon>Shewanella</taxon>
    </lineage>
</organism>
<comment type="function">
    <text evidence="1">Catalyzes the formation of a hydroxyacyl-CoA by addition of water on enoyl-CoA. Also exhibits 3-hydroxyacyl-CoA epimerase and 3-hydroxyacyl-CoA dehydrogenase activities.</text>
</comment>
<comment type="catalytic activity">
    <reaction evidence="1">
        <text>a (3S)-3-hydroxyacyl-CoA = a (2E)-enoyl-CoA + H2O</text>
        <dbReference type="Rhea" id="RHEA:16105"/>
        <dbReference type="ChEBI" id="CHEBI:15377"/>
        <dbReference type="ChEBI" id="CHEBI:57318"/>
        <dbReference type="ChEBI" id="CHEBI:58856"/>
        <dbReference type="EC" id="4.2.1.17"/>
    </reaction>
</comment>
<comment type="catalytic activity">
    <reaction evidence="1">
        <text>a 4-saturated-(3S)-3-hydroxyacyl-CoA = a (3E)-enoyl-CoA + H2O</text>
        <dbReference type="Rhea" id="RHEA:20724"/>
        <dbReference type="ChEBI" id="CHEBI:15377"/>
        <dbReference type="ChEBI" id="CHEBI:58521"/>
        <dbReference type="ChEBI" id="CHEBI:137480"/>
        <dbReference type="EC" id="4.2.1.17"/>
    </reaction>
</comment>
<comment type="catalytic activity">
    <reaction evidence="1">
        <text>a (3S)-3-hydroxyacyl-CoA + NAD(+) = a 3-oxoacyl-CoA + NADH + H(+)</text>
        <dbReference type="Rhea" id="RHEA:22432"/>
        <dbReference type="ChEBI" id="CHEBI:15378"/>
        <dbReference type="ChEBI" id="CHEBI:57318"/>
        <dbReference type="ChEBI" id="CHEBI:57540"/>
        <dbReference type="ChEBI" id="CHEBI:57945"/>
        <dbReference type="ChEBI" id="CHEBI:90726"/>
        <dbReference type="EC" id="1.1.1.35"/>
    </reaction>
</comment>
<comment type="catalytic activity">
    <reaction evidence="1">
        <text>(3S)-3-hydroxybutanoyl-CoA = (3R)-3-hydroxybutanoyl-CoA</text>
        <dbReference type="Rhea" id="RHEA:21760"/>
        <dbReference type="ChEBI" id="CHEBI:57315"/>
        <dbReference type="ChEBI" id="CHEBI:57316"/>
        <dbReference type="EC" id="5.1.2.3"/>
    </reaction>
</comment>
<comment type="pathway">
    <text evidence="1">Lipid metabolism; fatty acid beta-oxidation.</text>
</comment>
<comment type="subunit">
    <text evidence="1">Heterotetramer of two alpha chains (FadJ) and two beta chains (FadI).</text>
</comment>
<comment type="subcellular location">
    <subcellularLocation>
        <location evidence="1">Cytoplasm</location>
    </subcellularLocation>
</comment>
<comment type="similarity">
    <text evidence="1">In the N-terminal section; belongs to the enoyl-CoA hydratase/isomerase family.</text>
</comment>
<comment type="similarity">
    <text evidence="1">In the central section; belongs to the 3-hydroxyacyl-CoA dehydrogenase family.</text>
</comment>
<protein>
    <recommendedName>
        <fullName evidence="1">Fatty acid oxidation complex subunit alpha</fullName>
    </recommendedName>
    <domain>
        <recommendedName>
            <fullName evidence="1">Enoyl-CoA hydratase/3-hydroxybutyryl-CoA epimerase</fullName>
            <ecNumber evidence="1">4.2.1.17</ecNumber>
            <ecNumber evidence="1">5.1.2.3</ecNumber>
        </recommendedName>
    </domain>
    <domain>
        <recommendedName>
            <fullName evidence="1">3-hydroxyacyl-CoA dehydrogenase</fullName>
            <ecNumber evidence="1">1.1.1.35</ecNumber>
        </recommendedName>
    </domain>
</protein>
<gene>
    <name evidence="1" type="primary">fadJ</name>
    <name type="ordered locus">Shewana3_1461</name>
</gene>
<name>FADJ_SHESA</name>
<keyword id="KW-0963">Cytoplasm</keyword>
<keyword id="KW-0276">Fatty acid metabolism</keyword>
<keyword id="KW-0413">Isomerase</keyword>
<keyword id="KW-0442">Lipid degradation</keyword>
<keyword id="KW-0443">Lipid metabolism</keyword>
<keyword id="KW-0456">Lyase</keyword>
<keyword id="KW-0511">Multifunctional enzyme</keyword>
<keyword id="KW-0520">NAD</keyword>
<keyword id="KW-0560">Oxidoreductase</keyword>